<comment type="function">
    <text evidence="1">Binds directly to 23S ribosomal RNA and is necessary for the in vitro assembly process of the 50S ribosomal subunit. It is not involved in the protein synthesizing functions of that subunit.</text>
</comment>
<comment type="similarity">
    <text evidence="1">Belongs to the bacterial ribosomal protein bL20 family.</text>
</comment>
<name>RL20_ECTM1</name>
<sequence>MARVKRGVIARARHKKILKLAKGYYGARSRVFRVAKQAVIKAGQYAYRDRRQRKRQFRALWIARINAGARVNGLSYSRLIAGLKKASIEIDRKVLADLAVNEKAAFAAIVEKAKAVLA</sequence>
<protein>
    <recommendedName>
        <fullName evidence="1">Large ribosomal subunit protein bL20</fullName>
    </recommendedName>
    <alternativeName>
        <fullName evidence="2">50S ribosomal protein L20</fullName>
    </alternativeName>
</protein>
<feature type="chain" id="PRO_1000049042" description="Large ribosomal subunit protein bL20">
    <location>
        <begin position="1"/>
        <end position="118"/>
    </location>
</feature>
<evidence type="ECO:0000255" key="1">
    <source>
        <dbReference type="HAMAP-Rule" id="MF_00382"/>
    </source>
</evidence>
<evidence type="ECO:0000305" key="2"/>
<accession>A4XTS4</accession>
<keyword id="KW-0687">Ribonucleoprotein</keyword>
<keyword id="KW-0689">Ribosomal protein</keyword>
<keyword id="KW-0694">RNA-binding</keyword>
<keyword id="KW-0699">rRNA-binding</keyword>
<organism>
    <name type="scientific">Ectopseudomonas mendocina (strain ymp)</name>
    <name type="common">Pseudomonas mendocina</name>
    <dbReference type="NCBI Taxonomy" id="399739"/>
    <lineage>
        <taxon>Bacteria</taxon>
        <taxon>Pseudomonadati</taxon>
        <taxon>Pseudomonadota</taxon>
        <taxon>Gammaproteobacteria</taxon>
        <taxon>Pseudomonadales</taxon>
        <taxon>Pseudomonadaceae</taxon>
        <taxon>Ectopseudomonas</taxon>
    </lineage>
</organism>
<proteinExistence type="inferred from homology"/>
<dbReference type="EMBL" id="CP000680">
    <property type="protein sequence ID" value="ABP84740.1"/>
    <property type="molecule type" value="Genomic_DNA"/>
</dbReference>
<dbReference type="SMR" id="A4XTS4"/>
<dbReference type="STRING" id="399739.Pmen_1979"/>
<dbReference type="KEGG" id="pmy:Pmen_1979"/>
<dbReference type="eggNOG" id="COG0292">
    <property type="taxonomic scope" value="Bacteria"/>
</dbReference>
<dbReference type="HOGENOM" id="CLU_123265_0_1_6"/>
<dbReference type="OrthoDB" id="9808966at2"/>
<dbReference type="GO" id="GO:1990904">
    <property type="term" value="C:ribonucleoprotein complex"/>
    <property type="evidence" value="ECO:0007669"/>
    <property type="project" value="UniProtKB-KW"/>
</dbReference>
<dbReference type="GO" id="GO:0005840">
    <property type="term" value="C:ribosome"/>
    <property type="evidence" value="ECO:0007669"/>
    <property type="project" value="UniProtKB-KW"/>
</dbReference>
<dbReference type="GO" id="GO:0019843">
    <property type="term" value="F:rRNA binding"/>
    <property type="evidence" value="ECO:0007669"/>
    <property type="project" value="UniProtKB-UniRule"/>
</dbReference>
<dbReference type="GO" id="GO:0003735">
    <property type="term" value="F:structural constituent of ribosome"/>
    <property type="evidence" value="ECO:0007669"/>
    <property type="project" value="InterPro"/>
</dbReference>
<dbReference type="GO" id="GO:0000027">
    <property type="term" value="P:ribosomal large subunit assembly"/>
    <property type="evidence" value="ECO:0007669"/>
    <property type="project" value="UniProtKB-UniRule"/>
</dbReference>
<dbReference type="GO" id="GO:0006412">
    <property type="term" value="P:translation"/>
    <property type="evidence" value="ECO:0007669"/>
    <property type="project" value="InterPro"/>
</dbReference>
<dbReference type="CDD" id="cd07026">
    <property type="entry name" value="Ribosomal_L20"/>
    <property type="match status" value="1"/>
</dbReference>
<dbReference type="FunFam" id="1.10.1900.20:FF:000001">
    <property type="entry name" value="50S ribosomal protein L20"/>
    <property type="match status" value="1"/>
</dbReference>
<dbReference type="Gene3D" id="6.10.160.10">
    <property type="match status" value="1"/>
</dbReference>
<dbReference type="Gene3D" id="1.10.1900.20">
    <property type="entry name" value="Ribosomal protein L20"/>
    <property type="match status" value="1"/>
</dbReference>
<dbReference type="HAMAP" id="MF_00382">
    <property type="entry name" value="Ribosomal_bL20"/>
    <property type="match status" value="1"/>
</dbReference>
<dbReference type="InterPro" id="IPR005813">
    <property type="entry name" value="Ribosomal_bL20"/>
</dbReference>
<dbReference type="InterPro" id="IPR049946">
    <property type="entry name" value="RIBOSOMAL_L20_CS"/>
</dbReference>
<dbReference type="InterPro" id="IPR035566">
    <property type="entry name" value="Ribosomal_protein_bL20_C"/>
</dbReference>
<dbReference type="NCBIfam" id="TIGR01032">
    <property type="entry name" value="rplT_bact"/>
    <property type="match status" value="1"/>
</dbReference>
<dbReference type="PANTHER" id="PTHR10986">
    <property type="entry name" value="39S RIBOSOMAL PROTEIN L20"/>
    <property type="match status" value="1"/>
</dbReference>
<dbReference type="Pfam" id="PF00453">
    <property type="entry name" value="Ribosomal_L20"/>
    <property type="match status" value="1"/>
</dbReference>
<dbReference type="PRINTS" id="PR00062">
    <property type="entry name" value="RIBOSOMALL20"/>
</dbReference>
<dbReference type="SUPFAM" id="SSF74731">
    <property type="entry name" value="Ribosomal protein L20"/>
    <property type="match status" value="1"/>
</dbReference>
<dbReference type="PROSITE" id="PS00937">
    <property type="entry name" value="RIBOSOMAL_L20"/>
    <property type="match status" value="1"/>
</dbReference>
<gene>
    <name evidence="1" type="primary">rplT</name>
    <name type="ordered locus">Pmen_1979</name>
</gene>
<reference key="1">
    <citation type="submission" date="2007-04" db="EMBL/GenBank/DDBJ databases">
        <title>Complete sequence of Pseudomonas mendocina ymp.</title>
        <authorList>
            <consortium name="US DOE Joint Genome Institute"/>
            <person name="Copeland A."/>
            <person name="Lucas S."/>
            <person name="Lapidus A."/>
            <person name="Barry K."/>
            <person name="Glavina del Rio T."/>
            <person name="Dalin E."/>
            <person name="Tice H."/>
            <person name="Pitluck S."/>
            <person name="Kiss H."/>
            <person name="Brettin T."/>
            <person name="Detter J.C."/>
            <person name="Bruce D."/>
            <person name="Han C."/>
            <person name="Schmutz J."/>
            <person name="Larimer F."/>
            <person name="Land M."/>
            <person name="Hauser L."/>
            <person name="Kyrpides N."/>
            <person name="Mikhailova N."/>
            <person name="Hersman L."/>
            <person name="Dubois J."/>
            <person name="Maurice P."/>
            <person name="Richardson P."/>
        </authorList>
    </citation>
    <scope>NUCLEOTIDE SEQUENCE [LARGE SCALE GENOMIC DNA]</scope>
    <source>
        <strain>ymp</strain>
    </source>
</reference>